<protein>
    <recommendedName>
        <fullName evidence="1">Ketol-acid reductoisomerase (NADP(+))</fullName>
        <shortName evidence="1">KARI</shortName>
        <ecNumber evidence="1">1.1.1.86</ecNumber>
    </recommendedName>
    <alternativeName>
        <fullName evidence="1">Acetohydroxy-acid isomeroreductase</fullName>
        <shortName evidence="1">AHIR</shortName>
    </alternativeName>
    <alternativeName>
        <fullName evidence="1">Alpha-keto-beta-hydroxylacyl reductoisomerase</fullName>
    </alternativeName>
    <alternativeName>
        <fullName evidence="1">Ketol-acid reductoisomerase type 2</fullName>
    </alternativeName>
    <alternativeName>
        <fullName evidence="1">Ketol-acid reductoisomerase type II</fullName>
    </alternativeName>
</protein>
<proteinExistence type="inferred from homology"/>
<accession>A8A6N0</accession>
<reference key="1">
    <citation type="journal article" date="2008" name="J. Bacteriol.">
        <title>The pangenome structure of Escherichia coli: comparative genomic analysis of E. coli commensal and pathogenic isolates.</title>
        <authorList>
            <person name="Rasko D.A."/>
            <person name="Rosovitz M.J."/>
            <person name="Myers G.S.A."/>
            <person name="Mongodin E.F."/>
            <person name="Fricke W.F."/>
            <person name="Gajer P."/>
            <person name="Crabtree J."/>
            <person name="Sebaihia M."/>
            <person name="Thomson N.R."/>
            <person name="Chaudhuri R."/>
            <person name="Henderson I.R."/>
            <person name="Sperandio V."/>
            <person name="Ravel J."/>
        </authorList>
    </citation>
    <scope>NUCLEOTIDE SEQUENCE [LARGE SCALE GENOMIC DNA]</scope>
    <source>
        <strain>HS</strain>
    </source>
</reference>
<organism>
    <name type="scientific">Escherichia coli O9:H4 (strain HS)</name>
    <dbReference type="NCBI Taxonomy" id="331112"/>
    <lineage>
        <taxon>Bacteria</taxon>
        <taxon>Pseudomonadati</taxon>
        <taxon>Pseudomonadota</taxon>
        <taxon>Gammaproteobacteria</taxon>
        <taxon>Enterobacterales</taxon>
        <taxon>Enterobacteriaceae</taxon>
        <taxon>Escherichia</taxon>
    </lineage>
</organism>
<sequence length="491" mass="54069">MANYFNTLNLRQQLAQLGKCRFMGRDEFADGASYLQGKKVVIVGCGAQGLNQGLNMRDSGLDISYALRKEAIAEKRASWRKATENGFKVGTYEELIPQADLVINLTPDKQHSDVVRTVQPLMKDGAALGYSHGFNIVEVGEQIRKDITVVMVAPKCPGTEVREEYKRGFGVPTLIAVHPENDPKGEGMAIAKAWAAATGGHRAGVLESSFVAEVKSDLMGEQTILCGMLQAGSLLCFDKLVEEGTDPAYAEKLIQFGWETITEALKQGGITLMMDRLSNPAKLRAYALSEQLKEIMAPLFQKHMDDIISGEFSSGMMADWANDDKKLLTWREETGKTAFETAPQYEGKIGEQEYFDKGVLMIAMVKAGVELAFETMVDSGIIEESAYYESLHELPLIANTIARKRLYEMNVVISDTAEYGNYLFSYACVPLLKPFMAELQPGDLGKAIPEGAVDNGQLRDVNEAIRSHAIEQVGKKLRGYMTDMKRIAVAG</sequence>
<feature type="chain" id="PRO_1000060229" description="Ketol-acid reductoisomerase (NADP(+))">
    <location>
        <begin position="1"/>
        <end position="491"/>
    </location>
</feature>
<feature type="domain" description="KARI N-terminal Rossmann" evidence="2">
    <location>
        <begin position="15"/>
        <end position="208"/>
    </location>
</feature>
<feature type="domain" description="KARI C-terminal knotted 1" evidence="3">
    <location>
        <begin position="209"/>
        <end position="344"/>
    </location>
</feature>
<feature type="domain" description="KARI C-terminal knotted 2" evidence="3">
    <location>
        <begin position="345"/>
        <end position="484"/>
    </location>
</feature>
<feature type="active site" evidence="1">
    <location>
        <position position="132"/>
    </location>
</feature>
<feature type="binding site" evidence="1">
    <location>
        <begin position="45"/>
        <end position="48"/>
    </location>
    <ligand>
        <name>NADP(+)</name>
        <dbReference type="ChEBI" id="CHEBI:58349"/>
    </ligand>
</feature>
<feature type="binding site" evidence="1">
    <location>
        <position position="68"/>
    </location>
    <ligand>
        <name>NADP(+)</name>
        <dbReference type="ChEBI" id="CHEBI:58349"/>
    </ligand>
</feature>
<feature type="binding site" evidence="1">
    <location>
        <position position="76"/>
    </location>
    <ligand>
        <name>NADP(+)</name>
        <dbReference type="ChEBI" id="CHEBI:58349"/>
    </ligand>
</feature>
<feature type="binding site" evidence="1">
    <location>
        <position position="78"/>
    </location>
    <ligand>
        <name>NADP(+)</name>
        <dbReference type="ChEBI" id="CHEBI:58349"/>
    </ligand>
</feature>
<feature type="binding site" evidence="1">
    <location>
        <begin position="108"/>
        <end position="110"/>
    </location>
    <ligand>
        <name>NADP(+)</name>
        <dbReference type="ChEBI" id="CHEBI:58349"/>
    </ligand>
</feature>
<feature type="binding site" evidence="1">
    <location>
        <position position="158"/>
    </location>
    <ligand>
        <name>NADP(+)</name>
        <dbReference type="ChEBI" id="CHEBI:58349"/>
    </ligand>
</feature>
<feature type="binding site" evidence="1">
    <location>
        <position position="217"/>
    </location>
    <ligand>
        <name>Mg(2+)</name>
        <dbReference type="ChEBI" id="CHEBI:18420"/>
        <label>1</label>
    </ligand>
</feature>
<feature type="binding site" evidence="1">
    <location>
        <position position="217"/>
    </location>
    <ligand>
        <name>Mg(2+)</name>
        <dbReference type="ChEBI" id="CHEBI:18420"/>
        <label>2</label>
    </ligand>
</feature>
<feature type="binding site" evidence="1">
    <location>
        <position position="221"/>
    </location>
    <ligand>
        <name>Mg(2+)</name>
        <dbReference type="ChEBI" id="CHEBI:18420"/>
        <label>1</label>
    </ligand>
</feature>
<feature type="binding site" evidence="1">
    <location>
        <position position="389"/>
    </location>
    <ligand>
        <name>Mg(2+)</name>
        <dbReference type="ChEBI" id="CHEBI:18420"/>
        <label>2</label>
    </ligand>
</feature>
<feature type="binding site" evidence="1">
    <location>
        <position position="393"/>
    </location>
    <ligand>
        <name>Mg(2+)</name>
        <dbReference type="ChEBI" id="CHEBI:18420"/>
        <label>2</label>
    </ligand>
</feature>
<feature type="binding site" evidence="1">
    <location>
        <position position="414"/>
    </location>
    <ligand>
        <name>substrate</name>
    </ligand>
</feature>
<gene>
    <name evidence="1" type="primary">ilvC</name>
    <name type="ordered locus">EcHS_A3990</name>
</gene>
<name>ILVC_ECOHS</name>
<dbReference type="EC" id="1.1.1.86" evidence="1"/>
<dbReference type="EMBL" id="CP000802">
    <property type="protein sequence ID" value="ABV08184.1"/>
    <property type="molecule type" value="Genomic_DNA"/>
</dbReference>
<dbReference type="RefSeq" id="WP_000024939.1">
    <property type="nucleotide sequence ID" value="NC_009800.1"/>
</dbReference>
<dbReference type="SMR" id="A8A6N0"/>
<dbReference type="KEGG" id="ecx:EcHS_A3990"/>
<dbReference type="HOGENOM" id="CLU_551905_0_0_6"/>
<dbReference type="UniPathway" id="UPA00047">
    <property type="reaction ID" value="UER00056"/>
</dbReference>
<dbReference type="UniPathway" id="UPA00049">
    <property type="reaction ID" value="UER00060"/>
</dbReference>
<dbReference type="GO" id="GO:0005829">
    <property type="term" value="C:cytosol"/>
    <property type="evidence" value="ECO:0007669"/>
    <property type="project" value="TreeGrafter"/>
</dbReference>
<dbReference type="GO" id="GO:0004455">
    <property type="term" value="F:ketol-acid reductoisomerase activity"/>
    <property type="evidence" value="ECO:0007669"/>
    <property type="project" value="UniProtKB-UniRule"/>
</dbReference>
<dbReference type="GO" id="GO:0000287">
    <property type="term" value="F:magnesium ion binding"/>
    <property type="evidence" value="ECO:0007669"/>
    <property type="project" value="UniProtKB-UniRule"/>
</dbReference>
<dbReference type="GO" id="GO:0009097">
    <property type="term" value="P:isoleucine biosynthetic process"/>
    <property type="evidence" value="ECO:0007669"/>
    <property type="project" value="UniProtKB-UniRule"/>
</dbReference>
<dbReference type="GO" id="GO:0009099">
    <property type="term" value="P:L-valine biosynthetic process"/>
    <property type="evidence" value="ECO:0007669"/>
    <property type="project" value="UniProtKB-UniRule"/>
</dbReference>
<dbReference type="FunFam" id="1.10.1040.10:FF:000007">
    <property type="entry name" value="Ketol-acid reductoisomerase (NADP(+))"/>
    <property type="match status" value="1"/>
</dbReference>
<dbReference type="FunFam" id="3.40.50.720:FF:000043">
    <property type="entry name" value="Ketol-acid reductoisomerase (NADP(+))"/>
    <property type="match status" value="1"/>
</dbReference>
<dbReference type="Gene3D" id="1.10.1040.10">
    <property type="entry name" value="N-(1-d-carboxylethyl)-l-norvaline Dehydrogenase, domain 2"/>
    <property type="match status" value="1"/>
</dbReference>
<dbReference type="Gene3D" id="3.40.50.720">
    <property type="entry name" value="NAD(P)-binding Rossmann-like Domain"/>
    <property type="match status" value="1"/>
</dbReference>
<dbReference type="HAMAP" id="MF_00435">
    <property type="entry name" value="IlvC"/>
    <property type="match status" value="1"/>
</dbReference>
<dbReference type="InterPro" id="IPR008927">
    <property type="entry name" value="6-PGluconate_DH-like_C_sf"/>
</dbReference>
<dbReference type="InterPro" id="IPR013328">
    <property type="entry name" value="6PGD_dom2"/>
</dbReference>
<dbReference type="InterPro" id="IPR013023">
    <property type="entry name" value="KARI"/>
</dbReference>
<dbReference type="InterPro" id="IPR000506">
    <property type="entry name" value="KARI_C"/>
</dbReference>
<dbReference type="InterPro" id="IPR013116">
    <property type="entry name" value="KARI_N"/>
</dbReference>
<dbReference type="InterPro" id="IPR036291">
    <property type="entry name" value="NAD(P)-bd_dom_sf"/>
</dbReference>
<dbReference type="NCBIfam" id="TIGR00465">
    <property type="entry name" value="ilvC"/>
    <property type="match status" value="1"/>
</dbReference>
<dbReference type="NCBIfam" id="NF003557">
    <property type="entry name" value="PRK05225.1"/>
    <property type="match status" value="1"/>
</dbReference>
<dbReference type="PANTHER" id="PTHR21371">
    <property type="entry name" value="KETOL-ACID REDUCTOISOMERASE, MITOCHONDRIAL"/>
    <property type="match status" value="1"/>
</dbReference>
<dbReference type="PANTHER" id="PTHR21371:SF1">
    <property type="entry name" value="KETOL-ACID REDUCTOISOMERASE, MITOCHONDRIAL"/>
    <property type="match status" value="1"/>
</dbReference>
<dbReference type="Pfam" id="PF01450">
    <property type="entry name" value="KARI_C"/>
    <property type="match status" value="2"/>
</dbReference>
<dbReference type="Pfam" id="PF07991">
    <property type="entry name" value="KARI_N"/>
    <property type="match status" value="1"/>
</dbReference>
<dbReference type="SUPFAM" id="SSF48179">
    <property type="entry name" value="6-phosphogluconate dehydrogenase C-terminal domain-like"/>
    <property type="match status" value="2"/>
</dbReference>
<dbReference type="SUPFAM" id="SSF51735">
    <property type="entry name" value="NAD(P)-binding Rossmann-fold domains"/>
    <property type="match status" value="1"/>
</dbReference>
<dbReference type="PROSITE" id="PS51851">
    <property type="entry name" value="KARI_C"/>
    <property type="match status" value="2"/>
</dbReference>
<dbReference type="PROSITE" id="PS51850">
    <property type="entry name" value="KARI_N"/>
    <property type="match status" value="1"/>
</dbReference>
<evidence type="ECO:0000255" key="1">
    <source>
        <dbReference type="HAMAP-Rule" id="MF_00435"/>
    </source>
</evidence>
<evidence type="ECO:0000255" key="2">
    <source>
        <dbReference type="PROSITE-ProRule" id="PRU01197"/>
    </source>
</evidence>
<evidence type="ECO:0000255" key="3">
    <source>
        <dbReference type="PROSITE-ProRule" id="PRU01198"/>
    </source>
</evidence>
<keyword id="KW-0028">Amino-acid biosynthesis</keyword>
<keyword id="KW-0100">Branched-chain amino acid biosynthesis</keyword>
<keyword id="KW-0460">Magnesium</keyword>
<keyword id="KW-0479">Metal-binding</keyword>
<keyword id="KW-0521">NADP</keyword>
<keyword id="KW-0560">Oxidoreductase</keyword>
<keyword id="KW-0677">Repeat</keyword>
<comment type="function">
    <text evidence="1">Involved in the biosynthesis of branched-chain amino acids (BCAA). Catalyzes an alkyl-migration followed by a ketol-acid reduction of (S)-2-acetolactate (S2AL) to yield (R)-2,3-dihydroxy-isovalerate. In the isomerase reaction, S2AL is rearranged via a Mg-dependent methyl migration to produce 3-hydroxy-3-methyl-2-ketobutyrate (HMKB). In the reductase reaction, this 2-ketoacid undergoes a metal-dependent reduction by NADPH to yield (R)-2,3-dihydroxy-isovalerate.</text>
</comment>
<comment type="catalytic activity">
    <reaction evidence="1">
        <text>(2R)-2,3-dihydroxy-3-methylbutanoate + NADP(+) = (2S)-2-acetolactate + NADPH + H(+)</text>
        <dbReference type="Rhea" id="RHEA:22068"/>
        <dbReference type="ChEBI" id="CHEBI:15378"/>
        <dbReference type="ChEBI" id="CHEBI:49072"/>
        <dbReference type="ChEBI" id="CHEBI:57783"/>
        <dbReference type="ChEBI" id="CHEBI:58349"/>
        <dbReference type="ChEBI" id="CHEBI:58476"/>
        <dbReference type="EC" id="1.1.1.86"/>
    </reaction>
</comment>
<comment type="catalytic activity">
    <reaction evidence="1">
        <text>(2R,3R)-2,3-dihydroxy-3-methylpentanoate + NADP(+) = (S)-2-ethyl-2-hydroxy-3-oxobutanoate + NADPH + H(+)</text>
        <dbReference type="Rhea" id="RHEA:13493"/>
        <dbReference type="ChEBI" id="CHEBI:15378"/>
        <dbReference type="ChEBI" id="CHEBI:49256"/>
        <dbReference type="ChEBI" id="CHEBI:49258"/>
        <dbReference type="ChEBI" id="CHEBI:57783"/>
        <dbReference type="ChEBI" id="CHEBI:58349"/>
        <dbReference type="EC" id="1.1.1.86"/>
    </reaction>
</comment>
<comment type="cofactor">
    <cofactor evidence="1">
        <name>Mg(2+)</name>
        <dbReference type="ChEBI" id="CHEBI:18420"/>
    </cofactor>
    <text evidence="1">Binds 2 magnesium ions per subunit.</text>
</comment>
<comment type="pathway">
    <text evidence="1">Amino-acid biosynthesis; L-isoleucine biosynthesis; L-isoleucine from 2-oxobutanoate: step 2/4.</text>
</comment>
<comment type="pathway">
    <text evidence="1">Amino-acid biosynthesis; L-valine biosynthesis; L-valine from pyruvate: step 2/4.</text>
</comment>
<comment type="similarity">
    <text evidence="1">Belongs to the ketol-acid reductoisomerase family.</text>
</comment>